<gene>
    <name evidence="1" type="primary">gatA</name>
    <name type="ordered locus">MmarC5_0065</name>
</gene>
<keyword id="KW-0067">ATP-binding</keyword>
<keyword id="KW-0436">Ligase</keyword>
<keyword id="KW-0547">Nucleotide-binding</keyword>
<keyword id="KW-0648">Protein biosynthesis</keyword>
<dbReference type="EC" id="6.3.5.7" evidence="1"/>
<dbReference type="EMBL" id="CP000609">
    <property type="protein sequence ID" value="ABO34382.1"/>
    <property type="molecule type" value="Genomic_DNA"/>
</dbReference>
<dbReference type="RefSeq" id="WP_011867844.1">
    <property type="nucleotide sequence ID" value="NC_009135.1"/>
</dbReference>
<dbReference type="SMR" id="A4FW11"/>
<dbReference type="STRING" id="402880.MmarC5_0065"/>
<dbReference type="GeneID" id="4927607"/>
<dbReference type="KEGG" id="mmq:MmarC5_0065"/>
<dbReference type="eggNOG" id="arCOG01717">
    <property type="taxonomic scope" value="Archaea"/>
</dbReference>
<dbReference type="HOGENOM" id="CLU_009600_0_3_2"/>
<dbReference type="OrthoDB" id="7931at2157"/>
<dbReference type="Proteomes" id="UP000000253">
    <property type="component" value="Chromosome"/>
</dbReference>
<dbReference type="GO" id="GO:0030956">
    <property type="term" value="C:glutamyl-tRNA(Gln) amidotransferase complex"/>
    <property type="evidence" value="ECO:0007669"/>
    <property type="project" value="InterPro"/>
</dbReference>
<dbReference type="GO" id="GO:0005524">
    <property type="term" value="F:ATP binding"/>
    <property type="evidence" value="ECO:0007669"/>
    <property type="project" value="UniProtKB-KW"/>
</dbReference>
<dbReference type="GO" id="GO:0050567">
    <property type="term" value="F:glutaminyl-tRNA synthase (glutamine-hydrolyzing) activity"/>
    <property type="evidence" value="ECO:0007669"/>
    <property type="project" value="UniProtKB-UniRule"/>
</dbReference>
<dbReference type="GO" id="GO:0006412">
    <property type="term" value="P:translation"/>
    <property type="evidence" value="ECO:0007669"/>
    <property type="project" value="UniProtKB-UniRule"/>
</dbReference>
<dbReference type="Gene3D" id="3.90.1300.10">
    <property type="entry name" value="Amidase signature (AS) domain"/>
    <property type="match status" value="1"/>
</dbReference>
<dbReference type="HAMAP" id="MF_00120">
    <property type="entry name" value="GatA"/>
    <property type="match status" value="1"/>
</dbReference>
<dbReference type="InterPro" id="IPR000120">
    <property type="entry name" value="Amidase"/>
</dbReference>
<dbReference type="InterPro" id="IPR020556">
    <property type="entry name" value="Amidase_CS"/>
</dbReference>
<dbReference type="InterPro" id="IPR023631">
    <property type="entry name" value="Amidase_dom"/>
</dbReference>
<dbReference type="InterPro" id="IPR036928">
    <property type="entry name" value="AS_sf"/>
</dbReference>
<dbReference type="InterPro" id="IPR004412">
    <property type="entry name" value="GatA"/>
</dbReference>
<dbReference type="NCBIfam" id="TIGR00132">
    <property type="entry name" value="gatA"/>
    <property type="match status" value="1"/>
</dbReference>
<dbReference type="PANTHER" id="PTHR11895:SF7">
    <property type="entry name" value="GLUTAMYL-TRNA(GLN) AMIDOTRANSFERASE SUBUNIT A, MITOCHONDRIAL"/>
    <property type="match status" value="1"/>
</dbReference>
<dbReference type="PANTHER" id="PTHR11895">
    <property type="entry name" value="TRANSAMIDASE"/>
    <property type="match status" value="1"/>
</dbReference>
<dbReference type="Pfam" id="PF01425">
    <property type="entry name" value="Amidase"/>
    <property type="match status" value="1"/>
</dbReference>
<dbReference type="SUPFAM" id="SSF75304">
    <property type="entry name" value="Amidase signature (AS) enzymes"/>
    <property type="match status" value="1"/>
</dbReference>
<dbReference type="PROSITE" id="PS00571">
    <property type="entry name" value="AMIDASES"/>
    <property type="match status" value="1"/>
</dbReference>
<name>GATA_METM5</name>
<feature type="chain" id="PRO_1000015861" description="Glutamyl-tRNA(Gln) amidotransferase subunit A">
    <location>
        <begin position="1"/>
        <end position="431"/>
    </location>
</feature>
<feature type="active site" description="Charge relay system" evidence="1">
    <location>
        <position position="55"/>
    </location>
</feature>
<feature type="active site" description="Charge relay system" evidence="1">
    <location>
        <position position="130"/>
    </location>
</feature>
<feature type="active site" description="Acyl-ester intermediate" evidence="1">
    <location>
        <position position="154"/>
    </location>
</feature>
<proteinExistence type="inferred from homology"/>
<organism>
    <name type="scientific">Methanococcus maripaludis (strain C5 / ATCC BAA-1333)</name>
    <dbReference type="NCBI Taxonomy" id="402880"/>
    <lineage>
        <taxon>Archaea</taxon>
        <taxon>Methanobacteriati</taxon>
        <taxon>Methanobacteriota</taxon>
        <taxon>Methanomada group</taxon>
        <taxon>Methanococci</taxon>
        <taxon>Methanococcales</taxon>
        <taxon>Methanococcaceae</taxon>
        <taxon>Methanococcus</taxon>
    </lineage>
</organism>
<reference key="1">
    <citation type="submission" date="2007-03" db="EMBL/GenBank/DDBJ databases">
        <title>Complete sequence of chromosome of Methanococcus maripaludis C5.</title>
        <authorList>
            <consortium name="US DOE Joint Genome Institute"/>
            <person name="Copeland A."/>
            <person name="Lucas S."/>
            <person name="Lapidus A."/>
            <person name="Barry K."/>
            <person name="Glavina del Rio T."/>
            <person name="Dalin E."/>
            <person name="Tice H."/>
            <person name="Pitluck S."/>
            <person name="Chertkov O."/>
            <person name="Brettin T."/>
            <person name="Bruce D."/>
            <person name="Han C."/>
            <person name="Detter J.C."/>
            <person name="Schmutz J."/>
            <person name="Larimer F."/>
            <person name="Land M."/>
            <person name="Hauser L."/>
            <person name="Kyrpides N."/>
            <person name="Mikhailova N."/>
            <person name="Sieprawska-Lupa M."/>
            <person name="Whitman W.B."/>
            <person name="Richardson P."/>
        </authorList>
    </citation>
    <scope>NUCLEOTIDE SEQUENCE [LARGE SCALE GENOMIC DNA]</scope>
    <source>
        <strain>C5 / ATCC BAA-1333</strain>
    </source>
</reference>
<accession>A4FW11</accession>
<protein>
    <recommendedName>
        <fullName evidence="1">Glutamyl-tRNA(Gln) amidotransferase subunit A</fullName>
        <shortName evidence="1">Glu-ADT subunit A</shortName>
        <ecNumber evidence="1">6.3.5.7</ecNumber>
    </recommendedName>
</protein>
<comment type="function">
    <text evidence="1">Allows the formation of correctly charged Gln-tRNA(Gln) through the transamidation of misacylated Glu-tRNA(Gln) in organisms which lack glutaminyl-tRNA synthetase. The reaction takes place in the presence of glutamine and ATP through an activated gamma-phospho-Glu-tRNA(Gln).</text>
</comment>
<comment type="catalytic activity">
    <reaction evidence="1">
        <text>L-glutamyl-tRNA(Gln) + L-glutamine + ATP + H2O = L-glutaminyl-tRNA(Gln) + L-glutamate + ADP + phosphate + H(+)</text>
        <dbReference type="Rhea" id="RHEA:17521"/>
        <dbReference type="Rhea" id="RHEA-COMP:9681"/>
        <dbReference type="Rhea" id="RHEA-COMP:9684"/>
        <dbReference type="ChEBI" id="CHEBI:15377"/>
        <dbReference type="ChEBI" id="CHEBI:15378"/>
        <dbReference type="ChEBI" id="CHEBI:29985"/>
        <dbReference type="ChEBI" id="CHEBI:30616"/>
        <dbReference type="ChEBI" id="CHEBI:43474"/>
        <dbReference type="ChEBI" id="CHEBI:58359"/>
        <dbReference type="ChEBI" id="CHEBI:78520"/>
        <dbReference type="ChEBI" id="CHEBI:78521"/>
        <dbReference type="ChEBI" id="CHEBI:456216"/>
        <dbReference type="EC" id="6.3.5.7"/>
    </reaction>
</comment>
<comment type="subunit">
    <text evidence="1">Heterotrimer of A, B and C subunits.</text>
</comment>
<comment type="similarity">
    <text evidence="1">Belongs to the amidase family. GatA subfamily.</text>
</comment>
<sequence length="431" mass="47165">MITDRVSDYLEKIEKSDVNAFIDVNSEKVLKEAEELEKNDDLKNKPLYGKIVAVKSNINVKGYKISCASKTLEKYVGTYDATVVKKLRSQGALIVGMTNMDEFAGGSSGETSCYGPTKNPAALDRIPGGSSSGSAAAVAADLCDMAIGSDTGGSIRNPASHCGIVGFKPSYGVVSRQGLCDLAMSFDQIGPLTKNAEDALVLTNAIKGIDRSDSTSLETPKFEKKDISNYKVGVVKEFMDVTDEKIRNEIEKGIEVFKDMGCKIVDLSYKYIDLALPTYYLINYVEFFSATRKYDGRRYGEFIEEACGEEVLRRILIGKHISEQEFSGKYYKKALQARKSMKKEMLGLFNSADLIVGPTVPKLPHKLGEDLSPMEMYAYDVLTVPTNICGICSGVVRCGNISGVPVGLQIQGAPLEDEKVLSAMIEFEKNY</sequence>
<evidence type="ECO:0000255" key="1">
    <source>
        <dbReference type="HAMAP-Rule" id="MF_00120"/>
    </source>
</evidence>